<dbReference type="EC" id="6.3.2.8" evidence="1"/>
<dbReference type="EMBL" id="CP000386">
    <property type="protein sequence ID" value="ABG04454.1"/>
    <property type="molecule type" value="Genomic_DNA"/>
</dbReference>
<dbReference type="SMR" id="Q1AVX4"/>
<dbReference type="STRING" id="266117.Rxyl_1492"/>
<dbReference type="KEGG" id="rxy:Rxyl_1492"/>
<dbReference type="eggNOG" id="COG0773">
    <property type="taxonomic scope" value="Bacteria"/>
</dbReference>
<dbReference type="HOGENOM" id="CLU_028104_2_2_11"/>
<dbReference type="PhylomeDB" id="Q1AVX4"/>
<dbReference type="UniPathway" id="UPA00219"/>
<dbReference type="Proteomes" id="UP000006637">
    <property type="component" value="Chromosome"/>
</dbReference>
<dbReference type="GO" id="GO:0005737">
    <property type="term" value="C:cytoplasm"/>
    <property type="evidence" value="ECO:0007669"/>
    <property type="project" value="UniProtKB-SubCell"/>
</dbReference>
<dbReference type="GO" id="GO:0005524">
    <property type="term" value="F:ATP binding"/>
    <property type="evidence" value="ECO:0007669"/>
    <property type="project" value="UniProtKB-UniRule"/>
</dbReference>
<dbReference type="GO" id="GO:0008763">
    <property type="term" value="F:UDP-N-acetylmuramate-L-alanine ligase activity"/>
    <property type="evidence" value="ECO:0007669"/>
    <property type="project" value="UniProtKB-UniRule"/>
</dbReference>
<dbReference type="GO" id="GO:0051301">
    <property type="term" value="P:cell division"/>
    <property type="evidence" value="ECO:0007669"/>
    <property type="project" value="UniProtKB-KW"/>
</dbReference>
<dbReference type="GO" id="GO:0071555">
    <property type="term" value="P:cell wall organization"/>
    <property type="evidence" value="ECO:0007669"/>
    <property type="project" value="UniProtKB-KW"/>
</dbReference>
<dbReference type="GO" id="GO:0009252">
    <property type="term" value="P:peptidoglycan biosynthetic process"/>
    <property type="evidence" value="ECO:0007669"/>
    <property type="project" value="UniProtKB-UniRule"/>
</dbReference>
<dbReference type="GO" id="GO:0008360">
    <property type="term" value="P:regulation of cell shape"/>
    <property type="evidence" value="ECO:0007669"/>
    <property type="project" value="UniProtKB-KW"/>
</dbReference>
<dbReference type="Gene3D" id="3.90.190.20">
    <property type="entry name" value="Mur ligase, C-terminal domain"/>
    <property type="match status" value="1"/>
</dbReference>
<dbReference type="Gene3D" id="3.40.1190.10">
    <property type="entry name" value="Mur-like, catalytic domain"/>
    <property type="match status" value="1"/>
</dbReference>
<dbReference type="Gene3D" id="3.40.50.720">
    <property type="entry name" value="NAD(P)-binding Rossmann-like Domain"/>
    <property type="match status" value="1"/>
</dbReference>
<dbReference type="HAMAP" id="MF_00046">
    <property type="entry name" value="MurC"/>
    <property type="match status" value="1"/>
</dbReference>
<dbReference type="InterPro" id="IPR036565">
    <property type="entry name" value="Mur-like_cat_sf"/>
</dbReference>
<dbReference type="InterPro" id="IPR004101">
    <property type="entry name" value="Mur_ligase_C"/>
</dbReference>
<dbReference type="InterPro" id="IPR036615">
    <property type="entry name" value="Mur_ligase_C_dom_sf"/>
</dbReference>
<dbReference type="InterPro" id="IPR013221">
    <property type="entry name" value="Mur_ligase_cen"/>
</dbReference>
<dbReference type="InterPro" id="IPR000713">
    <property type="entry name" value="Mur_ligase_N"/>
</dbReference>
<dbReference type="InterPro" id="IPR050061">
    <property type="entry name" value="MurCDEF_pg_biosynth"/>
</dbReference>
<dbReference type="InterPro" id="IPR005758">
    <property type="entry name" value="UDP-N-AcMur_Ala_ligase_MurC"/>
</dbReference>
<dbReference type="NCBIfam" id="TIGR01082">
    <property type="entry name" value="murC"/>
    <property type="match status" value="1"/>
</dbReference>
<dbReference type="PANTHER" id="PTHR43445:SF3">
    <property type="entry name" value="UDP-N-ACETYLMURAMATE--L-ALANINE LIGASE"/>
    <property type="match status" value="1"/>
</dbReference>
<dbReference type="PANTHER" id="PTHR43445">
    <property type="entry name" value="UDP-N-ACETYLMURAMATE--L-ALANINE LIGASE-RELATED"/>
    <property type="match status" value="1"/>
</dbReference>
<dbReference type="Pfam" id="PF01225">
    <property type="entry name" value="Mur_ligase"/>
    <property type="match status" value="1"/>
</dbReference>
<dbReference type="Pfam" id="PF02875">
    <property type="entry name" value="Mur_ligase_C"/>
    <property type="match status" value="1"/>
</dbReference>
<dbReference type="Pfam" id="PF08245">
    <property type="entry name" value="Mur_ligase_M"/>
    <property type="match status" value="1"/>
</dbReference>
<dbReference type="SUPFAM" id="SSF51984">
    <property type="entry name" value="MurCD N-terminal domain"/>
    <property type="match status" value="1"/>
</dbReference>
<dbReference type="SUPFAM" id="SSF53623">
    <property type="entry name" value="MurD-like peptide ligases, catalytic domain"/>
    <property type="match status" value="1"/>
</dbReference>
<dbReference type="SUPFAM" id="SSF53244">
    <property type="entry name" value="MurD-like peptide ligases, peptide-binding domain"/>
    <property type="match status" value="1"/>
</dbReference>
<name>MURC_RUBXD</name>
<protein>
    <recommendedName>
        <fullName evidence="1">UDP-N-acetylmuramate--L-alanine ligase</fullName>
        <ecNumber evidence="1">6.3.2.8</ecNumber>
    </recommendedName>
    <alternativeName>
        <fullName evidence="1">UDP-N-acetylmuramoyl-L-alanine synthetase</fullName>
    </alternativeName>
</protein>
<feature type="chain" id="PRO_0000336865" description="UDP-N-acetylmuramate--L-alanine ligase">
    <location>
        <begin position="1"/>
        <end position="447"/>
    </location>
</feature>
<feature type="binding site" evidence="1">
    <location>
        <begin position="107"/>
        <end position="113"/>
    </location>
    <ligand>
        <name>ATP</name>
        <dbReference type="ChEBI" id="CHEBI:30616"/>
    </ligand>
</feature>
<keyword id="KW-0067">ATP-binding</keyword>
<keyword id="KW-0131">Cell cycle</keyword>
<keyword id="KW-0132">Cell division</keyword>
<keyword id="KW-0133">Cell shape</keyword>
<keyword id="KW-0961">Cell wall biogenesis/degradation</keyword>
<keyword id="KW-0963">Cytoplasm</keyword>
<keyword id="KW-0436">Ligase</keyword>
<keyword id="KW-0547">Nucleotide-binding</keyword>
<keyword id="KW-0573">Peptidoglycan synthesis</keyword>
<keyword id="KW-1185">Reference proteome</keyword>
<sequence length="447" mass="48093">MKVHMIGVGGAGMSGIAEVLARRGHEVTGSDLKESPYTRRLAAAGVKVYIGHEARQVGDAEVVVISTAIPKTNPELLEARRRSIPVIPRAEALARILAEGRGIAVAGTHGKTTTTSMIAHSLRALGENPTALVGGELNDIGSNVIFGREDLIVAEADESDRSILRLHPQAAVITNIEYDHPDFYASLEEVVETFARFVAGLPPEGHLVLCADDPRCRRLAELAPCPVTTYGLSGGELRARVLSPGSYLLFEGARKRGEVSLGVYGRHNVLNSLAAAGIARWLGHDPLEAARTLGSFGGVRRRFQLKGERSGVRVVDDYAHHPTEIMAILDVARATAAPEGRIIAVFQPHRYSRTRKLYREFGRAFGRADAVVVTEVYGAGEMPQPGVSGKLVVDAICETSDRPEVYYVPDQEALPEVLRMISGPRDTVITLGAGDISRAGEELLARL</sequence>
<proteinExistence type="inferred from homology"/>
<organism>
    <name type="scientific">Rubrobacter xylanophilus (strain DSM 9941 / JCM 11954 / NBRC 16129 / PRD-1)</name>
    <dbReference type="NCBI Taxonomy" id="266117"/>
    <lineage>
        <taxon>Bacteria</taxon>
        <taxon>Bacillati</taxon>
        <taxon>Actinomycetota</taxon>
        <taxon>Rubrobacteria</taxon>
        <taxon>Rubrobacterales</taxon>
        <taxon>Rubrobacteraceae</taxon>
        <taxon>Rubrobacter</taxon>
    </lineage>
</organism>
<gene>
    <name evidence="1" type="primary">murC</name>
    <name type="ordered locus">Rxyl_1492</name>
</gene>
<accession>Q1AVX4</accession>
<comment type="function">
    <text evidence="1">Cell wall formation.</text>
</comment>
<comment type="catalytic activity">
    <reaction evidence="1">
        <text>UDP-N-acetyl-alpha-D-muramate + L-alanine + ATP = UDP-N-acetyl-alpha-D-muramoyl-L-alanine + ADP + phosphate + H(+)</text>
        <dbReference type="Rhea" id="RHEA:23372"/>
        <dbReference type="ChEBI" id="CHEBI:15378"/>
        <dbReference type="ChEBI" id="CHEBI:30616"/>
        <dbReference type="ChEBI" id="CHEBI:43474"/>
        <dbReference type="ChEBI" id="CHEBI:57972"/>
        <dbReference type="ChEBI" id="CHEBI:70757"/>
        <dbReference type="ChEBI" id="CHEBI:83898"/>
        <dbReference type="ChEBI" id="CHEBI:456216"/>
        <dbReference type="EC" id="6.3.2.8"/>
    </reaction>
</comment>
<comment type="pathway">
    <text evidence="1">Cell wall biogenesis; peptidoglycan biosynthesis.</text>
</comment>
<comment type="subcellular location">
    <subcellularLocation>
        <location evidence="1">Cytoplasm</location>
    </subcellularLocation>
</comment>
<comment type="similarity">
    <text evidence="1">Belongs to the MurCDEF family.</text>
</comment>
<reference key="1">
    <citation type="submission" date="2006-06" db="EMBL/GenBank/DDBJ databases">
        <title>Complete sequence of Rubrobacter xylanophilus DSM 9941.</title>
        <authorList>
            <consortium name="US DOE Joint Genome Institute"/>
            <person name="Copeland A."/>
            <person name="Lucas S."/>
            <person name="Lapidus A."/>
            <person name="Barry K."/>
            <person name="Detter J.C."/>
            <person name="Glavina del Rio T."/>
            <person name="Hammon N."/>
            <person name="Israni S."/>
            <person name="Dalin E."/>
            <person name="Tice H."/>
            <person name="Pitluck S."/>
            <person name="Munk A.C."/>
            <person name="Brettin T."/>
            <person name="Bruce D."/>
            <person name="Han C."/>
            <person name="Tapia R."/>
            <person name="Gilna P."/>
            <person name="Schmutz J."/>
            <person name="Larimer F."/>
            <person name="Land M."/>
            <person name="Hauser L."/>
            <person name="Kyrpides N."/>
            <person name="Lykidis A."/>
            <person name="da Costa M.S."/>
            <person name="Rainey F.A."/>
            <person name="Empadinhas N."/>
            <person name="Jolivet E."/>
            <person name="Battista J.R."/>
            <person name="Richardson P."/>
        </authorList>
    </citation>
    <scope>NUCLEOTIDE SEQUENCE [LARGE SCALE GENOMIC DNA]</scope>
    <source>
        <strain>DSM 9941 / JCM 11954 / NBRC 16129 / PRD-1</strain>
    </source>
</reference>
<evidence type="ECO:0000255" key="1">
    <source>
        <dbReference type="HAMAP-Rule" id="MF_00046"/>
    </source>
</evidence>